<dbReference type="EMBL" id="BC074585">
    <property type="protein sequence ID" value="AAH74585.1"/>
    <property type="molecule type" value="mRNA"/>
</dbReference>
<dbReference type="RefSeq" id="NP_001005461.1">
    <property type="nucleotide sequence ID" value="NM_001005461.1"/>
</dbReference>
<dbReference type="SMR" id="Q6GLB5"/>
<dbReference type="FunCoup" id="Q6GLB5">
    <property type="interactions" value="3734"/>
</dbReference>
<dbReference type="STRING" id="8364.ENSXETP00000006138"/>
<dbReference type="PaxDb" id="8364-ENSXETP00000059917"/>
<dbReference type="DNASU" id="448062"/>
<dbReference type="GeneID" id="448062"/>
<dbReference type="KEGG" id="xtr:448062"/>
<dbReference type="AGR" id="Xenbase:XB-GENE-481800"/>
<dbReference type="CTD" id="1994"/>
<dbReference type="Xenbase" id="XB-GENE-481800">
    <property type="gene designation" value="elavl1"/>
</dbReference>
<dbReference type="eggNOG" id="KOG0145">
    <property type="taxonomic scope" value="Eukaryota"/>
</dbReference>
<dbReference type="InParanoid" id="Q6GLB5"/>
<dbReference type="OMA" id="QANTCIS"/>
<dbReference type="OrthoDB" id="266020at2759"/>
<dbReference type="Reactome" id="R-XTR-450520">
    <property type="pathway name" value="HuR (ELAVL1) binds and stabilizes mRNA"/>
</dbReference>
<dbReference type="Proteomes" id="UP000008143">
    <property type="component" value="Chromosome 1"/>
</dbReference>
<dbReference type="GO" id="GO:0005938">
    <property type="term" value="C:cell cortex"/>
    <property type="evidence" value="ECO:0000250"/>
    <property type="project" value="UniProtKB"/>
</dbReference>
<dbReference type="GO" id="GO:0005737">
    <property type="term" value="C:cytoplasm"/>
    <property type="evidence" value="ECO:0000250"/>
    <property type="project" value="UniProtKB"/>
</dbReference>
<dbReference type="GO" id="GO:0005634">
    <property type="term" value="C:nucleus"/>
    <property type="evidence" value="ECO:0000250"/>
    <property type="project" value="UniProtKB"/>
</dbReference>
<dbReference type="GO" id="GO:1990904">
    <property type="term" value="C:ribonucleoprotein complex"/>
    <property type="evidence" value="ECO:0000250"/>
    <property type="project" value="UniProtKB"/>
</dbReference>
<dbReference type="GO" id="GO:0035925">
    <property type="term" value="F:mRNA 3'-UTR AU-rich region binding"/>
    <property type="evidence" value="ECO:0000250"/>
    <property type="project" value="UniProtKB"/>
</dbReference>
<dbReference type="GO" id="GO:0003730">
    <property type="term" value="F:mRNA 3'-UTR binding"/>
    <property type="evidence" value="ECO:0000250"/>
    <property type="project" value="UniProtKB"/>
</dbReference>
<dbReference type="GO" id="GO:0003729">
    <property type="term" value="F:mRNA binding"/>
    <property type="evidence" value="ECO:0000250"/>
    <property type="project" value="UniProtKB"/>
</dbReference>
<dbReference type="GO" id="GO:0008266">
    <property type="term" value="F:poly(U) RNA binding"/>
    <property type="evidence" value="ECO:0000250"/>
    <property type="project" value="UniProtKB"/>
</dbReference>
<dbReference type="GO" id="GO:0070935">
    <property type="term" value="P:3'-UTR-mediated mRNA stabilization"/>
    <property type="evidence" value="ECO:0000250"/>
    <property type="project" value="UniProtKB"/>
</dbReference>
<dbReference type="GO" id="GO:0007369">
    <property type="term" value="P:gastrulation"/>
    <property type="evidence" value="ECO:0000250"/>
    <property type="project" value="UniProtKB"/>
</dbReference>
<dbReference type="GO" id="GO:0008298">
    <property type="term" value="P:intracellular mRNA localization"/>
    <property type="evidence" value="ECO:0000250"/>
    <property type="project" value="UniProtKB"/>
</dbReference>
<dbReference type="GO" id="GO:0048255">
    <property type="term" value="P:mRNA stabilization"/>
    <property type="evidence" value="ECO:0000250"/>
    <property type="project" value="UniProtKB"/>
</dbReference>
<dbReference type="GO" id="GO:2000036">
    <property type="term" value="P:regulation of stem cell population maintenance"/>
    <property type="evidence" value="ECO:0000250"/>
    <property type="project" value="UniProtKB"/>
</dbReference>
<dbReference type="CDD" id="cd12769">
    <property type="entry name" value="RRM1_HuR"/>
    <property type="match status" value="1"/>
</dbReference>
<dbReference type="CDD" id="cd12773">
    <property type="entry name" value="RRM2_HuR"/>
    <property type="match status" value="1"/>
</dbReference>
<dbReference type="CDD" id="cd12653">
    <property type="entry name" value="RRM3_HuR"/>
    <property type="match status" value="1"/>
</dbReference>
<dbReference type="FunFam" id="3.30.70.330:FF:000006">
    <property type="entry name" value="ELAV-like 3"/>
    <property type="match status" value="1"/>
</dbReference>
<dbReference type="FunFam" id="3.30.70.330:FF:000005">
    <property type="entry name" value="ELAV-like protein"/>
    <property type="match status" value="1"/>
</dbReference>
<dbReference type="FunFam" id="3.30.70.330:FF:000215">
    <property type="entry name" value="ELAV-like protein"/>
    <property type="match status" value="1"/>
</dbReference>
<dbReference type="Gene3D" id="3.30.70.330">
    <property type="match status" value="3"/>
</dbReference>
<dbReference type="InterPro" id="IPR006548">
    <property type="entry name" value="ELAD_HU_SF"/>
</dbReference>
<dbReference type="InterPro" id="IPR002343">
    <property type="entry name" value="Hud_Sxl_RNA"/>
</dbReference>
<dbReference type="InterPro" id="IPR034996">
    <property type="entry name" value="HuR_RRM2"/>
</dbReference>
<dbReference type="InterPro" id="IPR012677">
    <property type="entry name" value="Nucleotide-bd_a/b_plait_sf"/>
</dbReference>
<dbReference type="InterPro" id="IPR035979">
    <property type="entry name" value="RBD_domain_sf"/>
</dbReference>
<dbReference type="InterPro" id="IPR000504">
    <property type="entry name" value="RRM_dom"/>
</dbReference>
<dbReference type="NCBIfam" id="TIGR01661">
    <property type="entry name" value="ELAV_HUD_SF"/>
    <property type="match status" value="1"/>
</dbReference>
<dbReference type="PANTHER" id="PTHR10352">
    <property type="entry name" value="EUKARYOTIC TRANSLATION INITIATION FACTOR 3 SUBUNIT G"/>
    <property type="match status" value="1"/>
</dbReference>
<dbReference type="Pfam" id="PF00076">
    <property type="entry name" value="RRM_1"/>
    <property type="match status" value="3"/>
</dbReference>
<dbReference type="PRINTS" id="PR00961">
    <property type="entry name" value="HUDSXLRNA"/>
</dbReference>
<dbReference type="SMART" id="SM00360">
    <property type="entry name" value="RRM"/>
    <property type="match status" value="3"/>
</dbReference>
<dbReference type="SUPFAM" id="SSF54928">
    <property type="entry name" value="RNA-binding domain, RBD"/>
    <property type="match status" value="2"/>
</dbReference>
<dbReference type="PROSITE" id="PS50102">
    <property type="entry name" value="RRM"/>
    <property type="match status" value="3"/>
</dbReference>
<accession>Q6GLB5</accession>
<comment type="function">
    <text evidence="1 2">RNA-binding protein that binds to the 3'-UTR region of mRNAs and increases their stability. Involved in embryonic stem cells (ESCs) differentiation: preferentially binds mRNAs that are not methylated by N6-methyladenosine (m6A), stabilizing them, promoting ESCs differentiation (By similarity). Binds to poly-U elements and AU-rich elements (AREs) in the 3'-UTR of target mRNAs. Acts cooperatively with cribp to stabilize AU-rich sequence (ARE)-containing mRNAs. May play a role during gastrulation. Required for the vegetal localization of vg1 mRNA (By similarity).</text>
</comment>
<comment type="subunit">
    <text evidence="2">Interacts (via RRM3) with cirbp. Unable to form oligomers. Part of a ribonucleoprotein (RNP) complex, at least composed of elavl1/elrA and/or elavl2/elrB, igf2bp3/vg1RBP, ddx6/Xp54, ybx2/frgy2, lsm14b/rap55b and, in a subset of RNP complexes, stau1/staufen (By similarity).</text>
</comment>
<comment type="subcellular location">
    <subcellularLocation>
        <location evidence="2">Cytoplasm</location>
    </subcellularLocation>
    <subcellularLocation>
        <location evidence="2">Cytoplasm</location>
        <location evidence="2">Cell cortex</location>
    </subcellularLocation>
    <text evidence="2">Enriched at the vegetal cortex in stage III and IV oocytes. Shows very weak nuclear localization.</text>
</comment>
<comment type="similarity">
    <text evidence="3">Belongs to the RRM elav family.</text>
</comment>
<organism>
    <name type="scientific">Xenopus tropicalis</name>
    <name type="common">Western clawed frog</name>
    <name type="synonym">Silurana tropicalis</name>
    <dbReference type="NCBI Taxonomy" id="8364"/>
    <lineage>
        <taxon>Eukaryota</taxon>
        <taxon>Metazoa</taxon>
        <taxon>Chordata</taxon>
        <taxon>Craniata</taxon>
        <taxon>Vertebrata</taxon>
        <taxon>Euteleostomi</taxon>
        <taxon>Amphibia</taxon>
        <taxon>Batrachia</taxon>
        <taxon>Anura</taxon>
        <taxon>Pipoidea</taxon>
        <taxon>Pipidae</taxon>
        <taxon>Xenopodinae</taxon>
        <taxon>Xenopus</taxon>
        <taxon>Silurana</taxon>
    </lineage>
</organism>
<evidence type="ECO:0000250" key="1">
    <source>
        <dbReference type="UniProtKB" id="Q15717"/>
    </source>
</evidence>
<evidence type="ECO:0000250" key="2">
    <source>
        <dbReference type="UniProtKB" id="Q1JQ73"/>
    </source>
</evidence>
<evidence type="ECO:0000255" key="3"/>
<evidence type="ECO:0000255" key="4">
    <source>
        <dbReference type="PROSITE-ProRule" id="PRU00176"/>
    </source>
</evidence>
<evidence type="ECO:0000312" key="5">
    <source>
        <dbReference type="EMBL" id="AAH74585.1"/>
    </source>
</evidence>
<keyword id="KW-0963">Cytoplasm</keyword>
<keyword id="KW-0217">Developmental protein</keyword>
<keyword id="KW-0306">Gastrulation</keyword>
<keyword id="KW-1185">Reference proteome</keyword>
<keyword id="KW-0677">Repeat</keyword>
<keyword id="KW-0694">RNA-binding</keyword>
<feature type="chain" id="PRO_0000391370" description="ELAV-like protein 1">
    <location>
        <begin position="1"/>
        <end position="326"/>
    </location>
</feature>
<feature type="domain" description="RRM 1" evidence="4">
    <location>
        <begin position="20"/>
        <end position="98"/>
    </location>
</feature>
<feature type="domain" description="RRM 2" evidence="4">
    <location>
        <begin position="106"/>
        <end position="186"/>
    </location>
</feature>
<feature type="domain" description="RRM 3" evidence="4">
    <location>
        <begin position="244"/>
        <end position="322"/>
    </location>
</feature>
<gene>
    <name evidence="5" type="primary">elavl1</name>
    <name evidence="2" type="synonym">elrA</name>
</gene>
<proteinExistence type="evidence at transcript level"/>
<name>ELAV1_XENTR</name>
<sequence length="326" mass="35950">MSNGYGDHMDDVCRDDIGRTNLIVNYLPQNMTQDELRSLFSSIGEVESAKLIRDKVAGHSLGYGFVNYLNAKDAERAINTLNGLRLQSKTIKVSVARPSSESIKDANLYISGLPRTMTQKDVEDMFLPFGRIINSRVLVDQATGLSRGVAFIRFDKRSEAEEAIASFNGHKPPGSSEPITVKFAANPNQNKNMALLSQLCHSPARRFGGPVHHQAQRFRFSPMGVDHMSSISGVNVASSASSGWCIFIYNLGQDADEGILWQMFGPFGAVTNVKVIRDFNTNKCKGFGFVTMTNYEEAAMAIASLNGYRLGDKTLQVFFKTSKSHK</sequence>
<protein>
    <recommendedName>
        <fullName evidence="1">ELAV-like protein 1</fullName>
    </recommendedName>
    <alternativeName>
        <fullName evidence="1">Protein ElrA</fullName>
    </alternativeName>
</protein>
<reference evidence="5" key="1">
    <citation type="submission" date="2004-06" db="EMBL/GenBank/DDBJ databases">
        <authorList>
            <consortium name="NIH - Xenopus Gene Collection (XGC) project"/>
        </authorList>
    </citation>
    <scope>NUCLEOTIDE SEQUENCE [LARGE SCALE MRNA]</scope>
    <source>
        <tissue evidence="5">Embryo</tissue>
    </source>
</reference>